<accession>A1TTA2</accession>
<organism>
    <name type="scientific">Paracidovorax citrulli (strain AAC00-1)</name>
    <name type="common">Acidovorax citrulli</name>
    <dbReference type="NCBI Taxonomy" id="397945"/>
    <lineage>
        <taxon>Bacteria</taxon>
        <taxon>Pseudomonadati</taxon>
        <taxon>Pseudomonadota</taxon>
        <taxon>Betaproteobacteria</taxon>
        <taxon>Burkholderiales</taxon>
        <taxon>Comamonadaceae</taxon>
        <taxon>Paracidovorax</taxon>
    </lineage>
</organism>
<name>UBIB_PARC0</name>
<reference key="1">
    <citation type="submission" date="2006-12" db="EMBL/GenBank/DDBJ databases">
        <title>Complete sequence of Acidovorax avenae subsp. citrulli AAC00-1.</title>
        <authorList>
            <person name="Copeland A."/>
            <person name="Lucas S."/>
            <person name="Lapidus A."/>
            <person name="Barry K."/>
            <person name="Detter J.C."/>
            <person name="Glavina del Rio T."/>
            <person name="Dalin E."/>
            <person name="Tice H."/>
            <person name="Pitluck S."/>
            <person name="Kiss H."/>
            <person name="Brettin T."/>
            <person name="Bruce D."/>
            <person name="Han C."/>
            <person name="Tapia R."/>
            <person name="Gilna P."/>
            <person name="Schmutz J."/>
            <person name="Larimer F."/>
            <person name="Land M."/>
            <person name="Hauser L."/>
            <person name="Kyrpides N."/>
            <person name="Kim E."/>
            <person name="Stahl D."/>
            <person name="Richardson P."/>
        </authorList>
    </citation>
    <scope>NUCLEOTIDE SEQUENCE [LARGE SCALE GENOMIC DNA]</scope>
    <source>
        <strain>AAC00-1</strain>
    </source>
</reference>
<evidence type="ECO:0000255" key="1">
    <source>
        <dbReference type="HAMAP-Rule" id="MF_00414"/>
    </source>
</evidence>
<feature type="chain" id="PRO_1000123885" description="Probable protein kinase UbiB">
    <location>
        <begin position="1"/>
        <end position="522"/>
    </location>
</feature>
<feature type="transmembrane region" description="Helical" evidence="1">
    <location>
        <begin position="496"/>
        <end position="516"/>
    </location>
</feature>
<feature type="domain" description="Protein kinase" evidence="1">
    <location>
        <begin position="119"/>
        <end position="497"/>
    </location>
</feature>
<feature type="active site" description="Proton acceptor" evidence="1">
    <location>
        <position position="286"/>
    </location>
</feature>
<feature type="binding site" evidence="1">
    <location>
        <begin position="125"/>
        <end position="133"/>
    </location>
    <ligand>
        <name>ATP</name>
        <dbReference type="ChEBI" id="CHEBI:30616"/>
    </ligand>
</feature>
<feature type="binding site" evidence="1">
    <location>
        <position position="151"/>
    </location>
    <ligand>
        <name>ATP</name>
        <dbReference type="ChEBI" id="CHEBI:30616"/>
    </ligand>
</feature>
<gene>
    <name evidence="1" type="primary">ubiB</name>
    <name type="ordered locus">Aave_3641</name>
</gene>
<sequence>MSRLFRGATIVWVVLRYGLDELVLTSFQKPWLRLLARIVSFGRKLDAPRGQRLREALERLGPIFVKFGQVLSTRRDLLPPDIANELALLQDRVPPFDPDVAVATIERAFRRPVGEVFVSFERVPVASASIAQVHFAIVRDRHGVEREVAVKVLRPGMLPVIDNDLGLMRAMAGWVESLSADGKRLKPRQVVAEFDNYLHDELDLIREAANAAQLRRNMERLGLVRIPEILWDFCHPEVLVMERMKGVPISQIERLRAAGVDIRQLARDGVTIFFTQVFRDGFFHADMHPGNIQVSLEPGSFGRYISLDFGIVGSLTEFDKEYLAQNFTAFFRRDYKRVAELHVESGWVPADTRINELESAIRAVCEPYFDRPLKEISLGMVLMRLFQTSRRFHVEIQPQLVLLQKTLLNIEGLGRQLDPELDLWSTAKPFLEKWMLDQMGPQRLWREVKAESPHFAKMLPELPRLLHDYLHHKPHDHRREMQELLAEQRRTNRLLQSIIYGGMGFVLGLLALQFLIRIRFFH</sequence>
<comment type="function">
    <text evidence="1">Is probably a protein kinase regulator of UbiI activity which is involved in aerobic coenzyme Q (ubiquinone) biosynthesis.</text>
</comment>
<comment type="pathway">
    <text>Cofactor biosynthesis; ubiquinone biosynthesis [regulation].</text>
</comment>
<comment type="subcellular location">
    <subcellularLocation>
        <location evidence="1">Cell inner membrane</location>
        <topology evidence="1">Single-pass membrane protein</topology>
    </subcellularLocation>
</comment>
<comment type="similarity">
    <text evidence="1">Belongs to the ABC1 family. UbiB subfamily.</text>
</comment>
<dbReference type="EC" id="2.7.-.-" evidence="1"/>
<dbReference type="EMBL" id="CP000512">
    <property type="protein sequence ID" value="ABM34190.1"/>
    <property type="molecule type" value="Genomic_DNA"/>
</dbReference>
<dbReference type="RefSeq" id="WP_011796687.1">
    <property type="nucleotide sequence ID" value="NC_008752.1"/>
</dbReference>
<dbReference type="SMR" id="A1TTA2"/>
<dbReference type="STRING" id="397945.Aave_3641"/>
<dbReference type="KEGG" id="aav:Aave_3641"/>
<dbReference type="eggNOG" id="COG0661">
    <property type="taxonomic scope" value="Bacteria"/>
</dbReference>
<dbReference type="HOGENOM" id="CLU_006533_0_0_4"/>
<dbReference type="OrthoDB" id="9795390at2"/>
<dbReference type="UniPathway" id="UPA00232"/>
<dbReference type="Proteomes" id="UP000002596">
    <property type="component" value="Chromosome"/>
</dbReference>
<dbReference type="GO" id="GO:0005886">
    <property type="term" value="C:plasma membrane"/>
    <property type="evidence" value="ECO:0007669"/>
    <property type="project" value="UniProtKB-SubCell"/>
</dbReference>
<dbReference type="GO" id="GO:0005524">
    <property type="term" value="F:ATP binding"/>
    <property type="evidence" value="ECO:0007669"/>
    <property type="project" value="UniProtKB-KW"/>
</dbReference>
<dbReference type="GO" id="GO:0004672">
    <property type="term" value="F:protein kinase activity"/>
    <property type="evidence" value="ECO:0007669"/>
    <property type="project" value="UniProtKB-UniRule"/>
</dbReference>
<dbReference type="GO" id="GO:0010795">
    <property type="term" value="P:regulation of ubiquinone biosynthetic process"/>
    <property type="evidence" value="ECO:0007669"/>
    <property type="project" value="UniProtKB-UniRule"/>
</dbReference>
<dbReference type="GO" id="GO:0006744">
    <property type="term" value="P:ubiquinone biosynthetic process"/>
    <property type="evidence" value="ECO:0007669"/>
    <property type="project" value="UniProtKB-UniPathway"/>
</dbReference>
<dbReference type="CDD" id="cd13972">
    <property type="entry name" value="UbiB"/>
    <property type="match status" value="1"/>
</dbReference>
<dbReference type="HAMAP" id="MF_00414">
    <property type="entry name" value="UbiB"/>
    <property type="match status" value="1"/>
</dbReference>
<dbReference type="InterPro" id="IPR004147">
    <property type="entry name" value="ABC1_dom"/>
</dbReference>
<dbReference type="InterPro" id="IPR011009">
    <property type="entry name" value="Kinase-like_dom_sf"/>
</dbReference>
<dbReference type="InterPro" id="IPR010232">
    <property type="entry name" value="UbiB"/>
</dbReference>
<dbReference type="InterPro" id="IPR045308">
    <property type="entry name" value="UbiB_bact"/>
</dbReference>
<dbReference type="InterPro" id="IPR050154">
    <property type="entry name" value="UbiB_kinase"/>
</dbReference>
<dbReference type="NCBIfam" id="NF003404">
    <property type="entry name" value="PRK04750.1"/>
    <property type="match status" value="1"/>
</dbReference>
<dbReference type="NCBIfam" id="TIGR01982">
    <property type="entry name" value="UbiB"/>
    <property type="match status" value="1"/>
</dbReference>
<dbReference type="PANTHER" id="PTHR10566">
    <property type="entry name" value="CHAPERONE-ACTIVITY OF BC1 COMPLEX CABC1 -RELATED"/>
    <property type="match status" value="1"/>
</dbReference>
<dbReference type="PANTHER" id="PTHR10566:SF113">
    <property type="entry name" value="PROTEIN ACTIVITY OF BC1 COMPLEX KINASE 7, CHLOROPLASTIC"/>
    <property type="match status" value="1"/>
</dbReference>
<dbReference type="Pfam" id="PF03109">
    <property type="entry name" value="ABC1"/>
    <property type="match status" value="1"/>
</dbReference>
<dbReference type="SUPFAM" id="SSF56112">
    <property type="entry name" value="Protein kinase-like (PK-like)"/>
    <property type="match status" value="1"/>
</dbReference>
<keyword id="KW-0067">ATP-binding</keyword>
<keyword id="KW-0997">Cell inner membrane</keyword>
<keyword id="KW-1003">Cell membrane</keyword>
<keyword id="KW-0418">Kinase</keyword>
<keyword id="KW-0472">Membrane</keyword>
<keyword id="KW-0547">Nucleotide-binding</keyword>
<keyword id="KW-0808">Transferase</keyword>
<keyword id="KW-0812">Transmembrane</keyword>
<keyword id="KW-1133">Transmembrane helix</keyword>
<keyword id="KW-0831">Ubiquinone biosynthesis</keyword>
<protein>
    <recommendedName>
        <fullName evidence="1">Probable protein kinase UbiB</fullName>
        <ecNumber evidence="1">2.7.-.-</ecNumber>
    </recommendedName>
    <alternativeName>
        <fullName evidence="1">Ubiquinone biosynthesis protein UbiB</fullName>
    </alternativeName>
</protein>
<proteinExistence type="inferred from homology"/>